<keyword id="KW-0037">Angiogenesis</keyword>
<keyword id="KW-0968">Cytoplasmic vesicle</keyword>
<keyword id="KW-0217">Developmental protein</keyword>
<keyword id="KW-0221">Differentiation</keyword>
<keyword id="KW-0903">Direct protein sequencing</keyword>
<keyword id="KW-1015">Disulfide bond</keyword>
<keyword id="KW-0238">DNA-binding</keyword>
<keyword id="KW-0255">Endonuclease</keyword>
<keyword id="KW-0325">Glycoprotein</keyword>
<keyword id="KW-0378">Hydrolase</keyword>
<keyword id="KW-0479">Metal-binding</keyword>
<keyword id="KW-0540">Nuclease</keyword>
<keyword id="KW-0539">Nucleus</keyword>
<keyword id="KW-0652">Protein synthesis inhibitor</keyword>
<keyword id="KW-0873">Pyrrolidone carboxylic acid</keyword>
<keyword id="KW-1185">Reference proteome</keyword>
<keyword id="KW-0964">Secreted</keyword>
<keyword id="KW-0862">Zinc</keyword>
<sequence length="123" mass="14522">QNDAYRGFLRKHYDPSPTGHDDRYCNTMMERRNMTRPCKDTNTFIHGNSDDIRAVCDDRNGEPYRNGLRRSRSPFQVTTCRHRGGSPRPPCRYRAFRANRVIVIRCRDGFPIHLEENFIPPRP</sequence>
<evidence type="ECO:0000250" key="1">
    <source>
        <dbReference type="UniProtKB" id="P03950"/>
    </source>
</evidence>
<evidence type="ECO:0000250" key="2">
    <source>
        <dbReference type="UniProtKB" id="Q3TMQ6"/>
    </source>
</evidence>
<evidence type="ECO:0000250" key="3">
    <source>
        <dbReference type="UniProtKB" id="Q64438"/>
    </source>
</evidence>
<evidence type="ECO:0000269" key="4">
    <source>
    </source>
</evidence>
<evidence type="ECO:0000303" key="5">
    <source>
    </source>
</evidence>
<evidence type="ECO:0000305" key="6"/>
<protein>
    <recommendedName>
        <fullName evidence="5">Angiogenin-2</fullName>
        <ecNumber evidence="4">3.1.27.-</ecNumber>
    </recommendedName>
</protein>
<feature type="chain" id="PRO_0000057159" description="Angiogenin-2">
    <location>
        <begin position="1"/>
        <end position="123"/>
    </location>
</feature>
<feature type="short sequence motif" description="Nucleolar localization signal" evidence="1">
    <location>
        <begin position="30"/>
        <end position="34"/>
    </location>
</feature>
<feature type="active site" description="Proton acceptor" evidence="1">
    <location>
        <position position="12"/>
    </location>
</feature>
<feature type="active site" description="Proton donor" evidence="1">
    <location>
        <position position="113"/>
    </location>
</feature>
<feature type="binding site" evidence="3">
    <location>
        <position position="40"/>
    </location>
    <ligand>
        <name>Zn(2+)</name>
        <dbReference type="ChEBI" id="CHEBI:29105"/>
    </ligand>
</feature>
<feature type="binding site" evidence="3">
    <location>
        <position position="82"/>
    </location>
    <ligand>
        <name>Zn(2+)</name>
        <dbReference type="ChEBI" id="CHEBI:29105"/>
    </ligand>
</feature>
<feature type="binding site" evidence="3">
    <location>
        <position position="113"/>
    </location>
    <ligand>
        <name>Zn(2+)</name>
        <dbReference type="ChEBI" id="CHEBI:29105"/>
    </ligand>
</feature>
<feature type="modified residue" description="Pyrrolidone carboxylic acid" evidence="4">
    <location>
        <position position="1"/>
    </location>
</feature>
<feature type="glycosylation site" description="N-linked (GlcNAc...) asparagine" evidence="4">
    <location>
        <position position="33"/>
    </location>
</feature>
<feature type="disulfide bond" evidence="4">
    <location>
        <begin position="25"/>
        <end position="80"/>
    </location>
</feature>
<feature type="disulfide bond" evidence="4">
    <location>
        <begin position="38"/>
        <end position="91"/>
    </location>
</feature>
<feature type="disulfide bond" evidence="4">
    <location>
        <begin position="56"/>
        <end position="106"/>
    </location>
</feature>
<proteinExistence type="evidence at protein level"/>
<gene>
    <name evidence="5" type="primary">ANG2</name>
</gene>
<accession>P80929</accession>
<comment type="function">
    <text evidence="4">Binds tightly to placental ribonuclease inhibitor and has very low ribonuclease activity (PubMed:9266695). Has potent angiogenic activity (PubMed:9266695). Angiogenin induces vascularization of normal and malignant tissues (PubMed:9266695). Abolishes protein synthesis by specifically hydrolyzing cellular tRNAs (PubMed:9266695).</text>
</comment>
<comment type="activity regulation">
    <text evidence="3">Divalent metal ions, such as Cu2+ and Zn2+, may inhibit the ribonucleolytic activity.</text>
</comment>
<comment type="subcellular location">
    <subcellularLocation>
        <location evidence="2">Cytoplasmic vesicle</location>
        <location evidence="2">Secretory vesicle lumen</location>
    </subcellularLocation>
    <subcellularLocation>
        <location evidence="4">Secreted</location>
    </subcellularLocation>
    <subcellularLocation>
        <location evidence="1">Nucleus</location>
        <location evidence="1">Nucleolus</location>
    </subcellularLocation>
    <text evidence="1">Rapidly endocytosed by target cells and translocated to the nucleus where it accumulates in the nucleolus and binds to DNA (By similarity).</text>
</comment>
<comment type="tissue specificity">
    <text evidence="4">Serum and milk.</text>
</comment>
<comment type="similarity">
    <text evidence="6">Belongs to the pancreatic ribonuclease family.</text>
</comment>
<dbReference type="EC" id="3.1.27.-" evidence="4"/>
<dbReference type="SMR" id="P80929"/>
<dbReference type="FunCoup" id="P80929">
    <property type="interactions" value="3"/>
</dbReference>
<dbReference type="STRING" id="9913.ENSBTAP00000049727"/>
<dbReference type="GlyCosmos" id="P80929">
    <property type="glycosylation" value="1 site, No reported glycans"/>
</dbReference>
<dbReference type="GlyGen" id="P80929">
    <property type="glycosylation" value="1 site"/>
</dbReference>
<dbReference type="iPTMnet" id="P80929"/>
<dbReference type="PaxDb" id="9913-ENSBTAP00000049727"/>
<dbReference type="eggNOG" id="ENOG502S9Q1">
    <property type="taxonomic scope" value="Eukaryota"/>
</dbReference>
<dbReference type="HOGENOM" id="CLU_117006_3_1_1"/>
<dbReference type="InParanoid" id="P80929"/>
<dbReference type="OrthoDB" id="8573660at2759"/>
<dbReference type="Proteomes" id="UP000009136">
    <property type="component" value="Unplaced"/>
</dbReference>
<dbReference type="GO" id="GO:0031410">
    <property type="term" value="C:cytoplasmic vesicle"/>
    <property type="evidence" value="ECO:0007669"/>
    <property type="project" value="UniProtKB-KW"/>
</dbReference>
<dbReference type="GO" id="GO:0005576">
    <property type="term" value="C:extracellular region"/>
    <property type="evidence" value="ECO:0007669"/>
    <property type="project" value="UniProtKB-SubCell"/>
</dbReference>
<dbReference type="GO" id="GO:0005730">
    <property type="term" value="C:nucleolus"/>
    <property type="evidence" value="ECO:0007669"/>
    <property type="project" value="UniProtKB-SubCell"/>
</dbReference>
<dbReference type="GO" id="GO:0003677">
    <property type="term" value="F:DNA binding"/>
    <property type="evidence" value="ECO:0007669"/>
    <property type="project" value="UniProtKB-KW"/>
</dbReference>
<dbReference type="GO" id="GO:0004519">
    <property type="term" value="F:endonuclease activity"/>
    <property type="evidence" value="ECO:0007669"/>
    <property type="project" value="UniProtKB-KW"/>
</dbReference>
<dbReference type="GO" id="GO:0046872">
    <property type="term" value="F:metal ion binding"/>
    <property type="evidence" value="ECO:0007669"/>
    <property type="project" value="UniProtKB-KW"/>
</dbReference>
<dbReference type="GO" id="GO:0004540">
    <property type="term" value="F:RNA nuclease activity"/>
    <property type="evidence" value="ECO:0000318"/>
    <property type="project" value="GO_Central"/>
</dbReference>
<dbReference type="GO" id="GO:0001525">
    <property type="term" value="P:angiogenesis"/>
    <property type="evidence" value="ECO:0007669"/>
    <property type="project" value="UniProtKB-KW"/>
</dbReference>
<dbReference type="GO" id="GO:0030154">
    <property type="term" value="P:cell differentiation"/>
    <property type="evidence" value="ECO:0007669"/>
    <property type="project" value="UniProtKB-KW"/>
</dbReference>
<dbReference type="GO" id="GO:0050830">
    <property type="term" value="P:defense response to Gram-positive bacterium"/>
    <property type="evidence" value="ECO:0000318"/>
    <property type="project" value="GO_Central"/>
</dbReference>
<dbReference type="GO" id="GO:0017148">
    <property type="term" value="P:negative regulation of translation"/>
    <property type="evidence" value="ECO:0007669"/>
    <property type="project" value="UniProtKB-KW"/>
</dbReference>
<dbReference type="CDD" id="cd06265">
    <property type="entry name" value="RNase_A_canonical"/>
    <property type="match status" value="1"/>
</dbReference>
<dbReference type="FunFam" id="3.10.130.10:FF:000001">
    <property type="entry name" value="Ribonuclease pancreatic"/>
    <property type="match status" value="1"/>
</dbReference>
<dbReference type="Gene3D" id="3.10.130.10">
    <property type="entry name" value="Ribonuclease A-like domain"/>
    <property type="match status" value="1"/>
</dbReference>
<dbReference type="InterPro" id="IPR001427">
    <property type="entry name" value="RNaseA"/>
</dbReference>
<dbReference type="InterPro" id="IPR036816">
    <property type="entry name" value="RNaseA-like_dom_sf"/>
</dbReference>
<dbReference type="InterPro" id="IPR023411">
    <property type="entry name" value="RNaseA_AS"/>
</dbReference>
<dbReference type="InterPro" id="IPR023412">
    <property type="entry name" value="RNaseA_domain"/>
</dbReference>
<dbReference type="PANTHER" id="PTHR11437:SF65">
    <property type="entry name" value="ANGIOGENIN-2"/>
    <property type="match status" value="1"/>
</dbReference>
<dbReference type="PANTHER" id="PTHR11437">
    <property type="entry name" value="RIBONUCLEASE"/>
    <property type="match status" value="1"/>
</dbReference>
<dbReference type="Pfam" id="PF00074">
    <property type="entry name" value="RnaseA"/>
    <property type="match status" value="1"/>
</dbReference>
<dbReference type="PRINTS" id="PR00794">
    <property type="entry name" value="RIBONUCLEASE"/>
</dbReference>
<dbReference type="SMART" id="SM00092">
    <property type="entry name" value="RNAse_Pc"/>
    <property type="match status" value="1"/>
</dbReference>
<dbReference type="SUPFAM" id="SSF54076">
    <property type="entry name" value="RNase A-like"/>
    <property type="match status" value="1"/>
</dbReference>
<dbReference type="PROSITE" id="PS00127">
    <property type="entry name" value="RNASE_PANCREATIC"/>
    <property type="match status" value="1"/>
</dbReference>
<organism>
    <name type="scientific">Bos taurus</name>
    <name type="common">Bovine</name>
    <dbReference type="NCBI Taxonomy" id="9913"/>
    <lineage>
        <taxon>Eukaryota</taxon>
        <taxon>Metazoa</taxon>
        <taxon>Chordata</taxon>
        <taxon>Craniata</taxon>
        <taxon>Vertebrata</taxon>
        <taxon>Euteleostomi</taxon>
        <taxon>Mammalia</taxon>
        <taxon>Eutheria</taxon>
        <taxon>Laurasiatheria</taxon>
        <taxon>Artiodactyla</taxon>
        <taxon>Ruminantia</taxon>
        <taxon>Pecora</taxon>
        <taxon>Bovidae</taxon>
        <taxon>Bovinae</taxon>
        <taxon>Bos</taxon>
    </lineage>
</organism>
<reference key="1">
    <citation type="journal article" date="1997" name="Eur. J. Biochem.">
        <title>An angiogenic protein from bovine serum and milk -- purification and primary structure of angiogenin-2.</title>
        <authorList>
            <person name="Strydom D.J."/>
            <person name="Bond M.D."/>
            <person name="Vallee B.L."/>
        </authorList>
    </citation>
    <scope>PROTEIN SEQUENCE</scope>
    <scope>PYROGLUTAMATE FORMATION AT GLN-1</scope>
    <scope>FUNCTION</scope>
    <scope>GLYCOSYLATION AT ASN-33</scope>
    <scope>SUBCELLULAR LOCATION</scope>
    <source>
        <tissue>Milk</tissue>
        <tissue>Serum</tissue>
    </source>
</reference>
<name>ANG2_BOVIN</name>